<protein>
    <recommendedName>
        <fullName>Exopolysaccharide production repressor protein</fullName>
    </recommendedName>
</protein>
<reference key="1">
    <citation type="journal article" date="1990" name="J. Bacteriol.">
        <title>Two genes that regulate exopolysaccharide production in Rhizobium sp. strain NGR234: DNA sequences and resultant phenotypes.</title>
        <authorList>
            <person name="Gray J.X."/>
            <person name="Djordjevic M.A."/>
            <person name="Rolfe B.G."/>
        </authorList>
    </citation>
    <scope>NUCLEOTIDE SEQUENCE [GENOMIC DNA]</scope>
</reference>
<reference key="2">
    <citation type="journal article" date="2004" name="J. Bacteriol.">
        <title>An evolutionary hot spot: the pNGR234b replicon of Rhizobium sp. strain NGR234.</title>
        <authorList>
            <person name="Streit W.R."/>
            <person name="Schmitz R.A."/>
            <person name="Perret X."/>
            <person name="Staehelin C."/>
            <person name="Deakin W.J."/>
            <person name="Raasch C."/>
            <person name="Liesegang H."/>
            <person name="Broughton W.J."/>
        </authorList>
    </citation>
    <scope>NUCLEOTIDE SEQUENCE [LARGE SCALE GENOMIC DNA]</scope>
    <source>
        <strain>NBRC 101917 / NGR234</strain>
    </source>
</reference>
<reference key="3">
    <citation type="journal article" date="2009" name="Appl. Environ. Microbiol.">
        <title>Rhizobium sp. strain NGR234 possesses a remarkable number of secretion systems.</title>
        <authorList>
            <person name="Schmeisser C."/>
            <person name="Liesegang H."/>
            <person name="Krysciak D."/>
            <person name="Bakkou N."/>
            <person name="Le Quere A."/>
            <person name="Wollherr A."/>
            <person name="Heinemeyer I."/>
            <person name="Morgenstern B."/>
            <person name="Pommerening-Roeser A."/>
            <person name="Flores M."/>
            <person name="Palacios R."/>
            <person name="Brenner S."/>
            <person name="Gottschalk G."/>
            <person name="Schmitz R.A."/>
            <person name="Broughton W.J."/>
            <person name="Perret X."/>
            <person name="Strittmatter A.W."/>
            <person name="Streit W.R."/>
        </authorList>
    </citation>
    <scope>NUCLEOTIDE SEQUENCE [LARGE SCALE GENOMIC DNA]</scope>
    <source>
        <strain>NBRC 101917 / NGR234</strain>
    </source>
</reference>
<proteinExistence type="predicted"/>
<sequence>MFAPRFVVSMLGALAAFAIATYFLTGSIASTAVQTLLCAVLIQVGYFLAVLFLVWKEARDRRKLSPGQLPADPTNDEKQTGKLSLRRLNRPPHFNS</sequence>
<comment type="function">
    <text>Inhibition of exopolysaccharide synthesis (EPS) and nodulation ability (NOD).</text>
</comment>
<comment type="pathway">
    <text>Glycan metabolism; exopolysaccharide biosynthesis.</text>
</comment>
<comment type="subcellular location">
    <subcellularLocation>
        <location evidence="3">Cell membrane</location>
        <topology evidence="3">Multi-pass membrane protein</topology>
    </subcellularLocation>
</comment>
<organism>
    <name type="scientific">Sinorhizobium fredii (strain NBRC 101917 / NGR234)</name>
    <dbReference type="NCBI Taxonomy" id="394"/>
    <lineage>
        <taxon>Bacteria</taxon>
        <taxon>Pseudomonadati</taxon>
        <taxon>Pseudomonadota</taxon>
        <taxon>Alphaproteobacteria</taxon>
        <taxon>Hyphomicrobiales</taxon>
        <taxon>Rhizobiaceae</taxon>
        <taxon>Sinorhizobium/Ensifer group</taxon>
        <taxon>Sinorhizobium</taxon>
    </lineage>
</organism>
<keyword id="KW-1003">Cell membrane</keyword>
<keyword id="KW-0270">Exopolysaccharide synthesis</keyword>
<keyword id="KW-0472">Membrane</keyword>
<keyword id="KW-0536">Nodulation</keyword>
<keyword id="KW-0614">Plasmid</keyword>
<keyword id="KW-1185">Reference proteome</keyword>
<keyword id="KW-0812">Transmembrane</keyword>
<keyword id="KW-1133">Transmembrane helix</keyword>
<name>EXOX_SINFN</name>
<dbReference type="EMBL" id="X16704">
    <property type="protein sequence ID" value="CAA34675.1"/>
    <property type="molecule type" value="Genomic_DNA"/>
</dbReference>
<dbReference type="EMBL" id="AY316746">
    <property type="protein sequence ID" value="AAQ87042.1"/>
    <property type="molecule type" value="Genomic_DNA"/>
</dbReference>
<dbReference type="EMBL" id="CP000874">
    <property type="protein sequence ID" value="ACP23278.1"/>
    <property type="molecule type" value="Genomic_DNA"/>
</dbReference>
<dbReference type="RefSeq" id="WP_015887901.1">
    <property type="nucleotide sequence ID" value="NC_012586.1"/>
</dbReference>
<dbReference type="RefSeq" id="YP_002824031.1">
    <property type="nucleotide sequence ID" value="NC_012586.1"/>
</dbReference>
<dbReference type="KEGG" id="rhi:NGR_b18280"/>
<dbReference type="PATRIC" id="fig|394.7.peg.2245"/>
<dbReference type="HOGENOM" id="CLU_2353631_0_0_5"/>
<dbReference type="OrthoDB" id="9802759at2"/>
<dbReference type="UniPathway" id="UPA00631"/>
<dbReference type="Proteomes" id="UP000001054">
    <property type="component" value="Plasmid pNGR234b"/>
</dbReference>
<dbReference type="GO" id="GO:0005886">
    <property type="term" value="C:plasma membrane"/>
    <property type="evidence" value="ECO:0007669"/>
    <property type="project" value="UniProtKB-SubCell"/>
</dbReference>
<dbReference type="GO" id="GO:0000271">
    <property type="term" value="P:polysaccharide biosynthetic process"/>
    <property type="evidence" value="ECO:0007669"/>
    <property type="project" value="UniProtKB-KW"/>
</dbReference>
<dbReference type="InterPro" id="IPR024239">
    <property type="entry name" value="SyrA"/>
</dbReference>
<dbReference type="Pfam" id="PF11089">
    <property type="entry name" value="SyrA"/>
    <property type="match status" value="1"/>
</dbReference>
<accession>P14185</accession>
<accession>Q6W2H5</accession>
<gene>
    <name type="primary">exoX</name>
    <name type="ordered locus">NGR_b18280</name>
    <name type="ORF">RNGR00015</name>
</gene>
<geneLocation type="plasmid">
    <name>sym pNGR234b</name>
</geneLocation>
<feature type="chain" id="PRO_0000087140" description="Exopolysaccharide production repressor protein">
    <location>
        <begin position="1"/>
        <end position="96"/>
    </location>
</feature>
<feature type="transmembrane region" description="Helical" evidence="1">
    <location>
        <begin position="6"/>
        <end position="26"/>
    </location>
</feature>
<feature type="transmembrane region" description="Helical" evidence="1">
    <location>
        <begin position="35"/>
        <end position="55"/>
    </location>
</feature>
<feature type="region of interest" description="Disordered" evidence="2">
    <location>
        <begin position="64"/>
        <end position="96"/>
    </location>
</feature>
<evidence type="ECO:0000255" key="1"/>
<evidence type="ECO:0000256" key="2">
    <source>
        <dbReference type="SAM" id="MobiDB-lite"/>
    </source>
</evidence>
<evidence type="ECO:0000305" key="3"/>